<proteinExistence type="evidence at transcript level"/>
<dbReference type="EMBL" id="CH476597">
    <property type="protein sequence ID" value="EAU36708.1"/>
    <property type="molecule type" value="Genomic_DNA"/>
</dbReference>
<dbReference type="RefSeq" id="XP_001212612.1">
    <property type="nucleotide sequence ID" value="XM_001212612.1"/>
</dbReference>
<dbReference type="SMR" id="Q0CSA0"/>
<dbReference type="STRING" id="341663.Q0CSA0"/>
<dbReference type="EnsemblFungi" id="EAU36708">
    <property type="protein sequence ID" value="EAU36708"/>
    <property type="gene ID" value="ATEG_03434"/>
</dbReference>
<dbReference type="GeneID" id="4318029"/>
<dbReference type="VEuPathDB" id="FungiDB:ATEG_03434"/>
<dbReference type="eggNOG" id="ENOG502SI00">
    <property type="taxonomic scope" value="Eukaryota"/>
</dbReference>
<dbReference type="HOGENOM" id="CLU_029138_1_0_1"/>
<dbReference type="OMA" id="TGREHWG"/>
<dbReference type="OrthoDB" id="2548233at2759"/>
<dbReference type="Proteomes" id="UP000007963">
    <property type="component" value="Unassembled WGS sequence"/>
</dbReference>
<dbReference type="Gene3D" id="3.30.559.30">
    <property type="entry name" value="Nonribosomal peptide synthetase, condensation domain"/>
    <property type="match status" value="1"/>
</dbReference>
<dbReference type="PANTHER" id="PTHR42034">
    <property type="entry name" value="CHROMOSOME 7, WHOLE GENOME SHOTGUN SEQUENCE-RELATED"/>
    <property type="match status" value="1"/>
</dbReference>
<dbReference type="PANTHER" id="PTHR42034:SF1">
    <property type="entry name" value="CONDENSATION DOMAIN-CONTAINING PROTEIN"/>
    <property type="match status" value="1"/>
</dbReference>
<dbReference type="SUPFAM" id="SSF52777">
    <property type="entry name" value="CoA-dependent acyltransferases"/>
    <property type="match status" value="1"/>
</dbReference>
<keyword id="KW-1185">Reference proteome</keyword>
<keyword id="KW-0804">Transcription</keyword>
<keyword id="KW-0805">Transcription regulation</keyword>
<protein>
    <recommendedName>
        <fullName evidence="3">Azaphilone biosynthesis cluster protein M</fullName>
    </recommendedName>
</protein>
<name>TAZM_ASPTN</name>
<feature type="chain" id="PRO_0000456076" description="Azaphilone biosynthesis cluster protein M">
    <location>
        <begin position="1"/>
        <end position="413"/>
    </location>
</feature>
<feature type="region of interest" description="Disordered" evidence="1">
    <location>
        <begin position="123"/>
        <end position="145"/>
    </location>
</feature>
<feature type="compositionally biased region" description="Polar residues" evidence="1">
    <location>
        <begin position="123"/>
        <end position="138"/>
    </location>
</feature>
<accession>Q0CSA0</accession>
<sequence>MGSIINIPGLPDGEFSNYEQVYLKMSRAFSHLQKEHWGIHCVCSVSRDSPNGSTFSETLRQAWMRLVVEYPGLSMVPVGLQKKYPRLDEKVVLLIQHWRVDALGTCMLLDRLFEILGQSTVPSTQPDQVQPNQPTPSFESAAGASKTEDADLQAYARDYIDSFHQRAVNADGLPYRGDATTPPSTTAHWDLDFSVDSTNAIKDACRHHKISVTAAIHTALARTVFSYLTETECQAGYTTVMAVNMRPYLPPPYNSKKHACQTFVASITPTVPYHSGFVESARSLTHEYRSWWSADFMRSLWWIYEYHLAKLSAPRPANAAPMKPPSGVTLSSLGVVDRNLRGGYGPNLRVDKFRFGVSMMTRQTILYAWTFKDRLTLSLNYNDAYYSDLMAREVMSRVASHLEKGLEVELNTV</sequence>
<organism>
    <name type="scientific">Aspergillus terreus (strain NIH 2624 / FGSC A1156)</name>
    <dbReference type="NCBI Taxonomy" id="341663"/>
    <lineage>
        <taxon>Eukaryota</taxon>
        <taxon>Fungi</taxon>
        <taxon>Dikarya</taxon>
        <taxon>Ascomycota</taxon>
        <taxon>Pezizomycotina</taxon>
        <taxon>Eurotiomycetes</taxon>
        <taxon>Eurotiomycetidae</taxon>
        <taxon>Eurotiales</taxon>
        <taxon>Aspergillaceae</taxon>
        <taxon>Aspergillus</taxon>
        <taxon>Aspergillus subgen. Circumdati</taxon>
    </lineage>
</organism>
<gene>
    <name evidence="3" type="primary">tazM</name>
    <name type="ORF">ATEG_03434</name>
</gene>
<reference key="1">
    <citation type="submission" date="2005-09" db="EMBL/GenBank/DDBJ databases">
        <title>Annotation of the Aspergillus terreus NIH2624 genome.</title>
        <authorList>
            <person name="Birren B.W."/>
            <person name="Lander E.S."/>
            <person name="Galagan J.E."/>
            <person name="Nusbaum C."/>
            <person name="Devon K."/>
            <person name="Henn M."/>
            <person name="Ma L.-J."/>
            <person name="Jaffe D.B."/>
            <person name="Butler J."/>
            <person name="Alvarez P."/>
            <person name="Gnerre S."/>
            <person name="Grabherr M."/>
            <person name="Kleber M."/>
            <person name="Mauceli E.W."/>
            <person name="Brockman W."/>
            <person name="Rounsley S."/>
            <person name="Young S.K."/>
            <person name="LaButti K."/>
            <person name="Pushparaj V."/>
            <person name="DeCaprio D."/>
            <person name="Crawford M."/>
            <person name="Koehrsen M."/>
            <person name="Engels R."/>
            <person name="Montgomery P."/>
            <person name="Pearson M."/>
            <person name="Howarth C."/>
            <person name="Larson L."/>
            <person name="Luoma S."/>
            <person name="White J."/>
            <person name="Alvarado L."/>
            <person name="Kodira C.D."/>
            <person name="Zeng Q."/>
            <person name="Oleary S."/>
            <person name="Yandava C."/>
            <person name="Denning D.W."/>
            <person name="Nierman W.C."/>
            <person name="Milne T."/>
            <person name="Madden K."/>
        </authorList>
    </citation>
    <scope>NUCLEOTIDE SEQUENCE [LARGE SCALE GENOMIC DNA]</scope>
    <source>
        <strain>NIH 2624 / FGSC A1156</strain>
    </source>
</reference>
<reference key="2">
    <citation type="journal article" date="2022" name="Fungal Genet. Biol.">
        <title>Characterization of a silent azaphilone biosynthesis gene cluster in Aspergillus terreus NIH 2624.</title>
        <authorList>
            <person name="Sun W.W."/>
            <person name="Li C.Y."/>
            <person name="Chiang Y.M."/>
            <person name="Lin T.S."/>
            <person name="Warren S."/>
            <person name="Chang F.R."/>
            <person name="Wang C.C.C."/>
        </authorList>
    </citation>
    <scope>FUNCTION</scope>
    <scope>INDUCTION</scope>
    <scope>PATHWAY</scope>
</reference>
<evidence type="ECO:0000256" key="1">
    <source>
        <dbReference type="SAM" id="MobiDB-lite"/>
    </source>
</evidence>
<evidence type="ECO:0000269" key="2">
    <source>
    </source>
</evidence>
<evidence type="ECO:0000303" key="3">
    <source>
    </source>
</evidence>
<evidence type="ECO:0000305" key="4">
    <source>
    </source>
</evidence>
<comment type="function">
    <text evidence="2 4">Part of the gene cluster that mediates the biosynthesis of azaterrilone A and other azaphilones, a class of fungal metabolites characterized by a highly oxygenated pyrano-quinone bicyclic core and exhibiting a broad range of bioactivities (PubMed:35398258). The first step of the pathway begins with the non-reducing polyketide synthase tazA that assembles one acetyl-CoA starter unit, five malonyl-CoA units, and catalyzes a series of Claisen condensations, methylation, PT-mediated cyclization, and finally releases the first hexaketide precursor through the R-domain. The tazA product then undergoes reduction on its terminal ketone and the following pyran-ring formation by yet undetermined enzyme(s). Dehydration and enoyl reduction, possibly involving the trans-enoyl reductase tazE leads to the next intermediate. TazD is predicted as an acetyltransferase and might catalyze the acetylation steps leading to the synthesis of azaterrilone A. Azaterrilone A is not the final product of the taz pathway and both the highly reducing polyketide synthase tazB and the dual enzyme tazHJ catalyze late steps of the pathway, leading to the production of the 2 final stereoisomers that contain additional polyketide modification whose structures have still to be determined (Probable).</text>
</comment>
<comment type="pathway">
    <text evidence="4">Secondary metabolite biosynthesis.</text>
</comment>
<comment type="induction">
    <text evidence="2">Expression is positively regulated by the azaterrilone A cluster-specific transcription factor tazR.</text>
</comment>